<protein>
    <recommendedName>
        <fullName evidence="1">Serine hydroxymethyltransferase</fullName>
        <shortName evidence="1">SHMT</shortName>
        <shortName evidence="1">Serine methylase</shortName>
        <ecNumber evidence="1">2.1.2.1</ecNumber>
    </recommendedName>
</protein>
<comment type="function">
    <text evidence="1">Catalyzes the reversible interconversion of serine and glycine with tetrahydrofolate (THF) serving as the one-carbon carrier. This reaction serves as the major source of one-carbon groups required for the biosynthesis of purines, thymidylate, methionine, and other important biomolecules. Also exhibits THF-independent aldolase activity toward beta-hydroxyamino acids, producing glycine and aldehydes, via a retro-aldol mechanism.</text>
</comment>
<comment type="catalytic activity">
    <reaction evidence="1">
        <text>(6R)-5,10-methylene-5,6,7,8-tetrahydrofolate + glycine + H2O = (6S)-5,6,7,8-tetrahydrofolate + L-serine</text>
        <dbReference type="Rhea" id="RHEA:15481"/>
        <dbReference type="ChEBI" id="CHEBI:15377"/>
        <dbReference type="ChEBI" id="CHEBI:15636"/>
        <dbReference type="ChEBI" id="CHEBI:33384"/>
        <dbReference type="ChEBI" id="CHEBI:57305"/>
        <dbReference type="ChEBI" id="CHEBI:57453"/>
        <dbReference type="EC" id="2.1.2.1"/>
    </reaction>
</comment>
<comment type="cofactor">
    <cofactor evidence="1">
        <name>pyridoxal 5'-phosphate</name>
        <dbReference type="ChEBI" id="CHEBI:597326"/>
    </cofactor>
</comment>
<comment type="pathway">
    <text evidence="1">One-carbon metabolism; tetrahydrofolate interconversion.</text>
</comment>
<comment type="pathway">
    <text evidence="1">Amino-acid biosynthesis; glycine biosynthesis; glycine from L-serine: step 1/1.</text>
</comment>
<comment type="subunit">
    <text evidence="1">Homodimer.</text>
</comment>
<comment type="subcellular location">
    <subcellularLocation>
        <location evidence="1">Cytoplasm</location>
    </subcellularLocation>
</comment>
<comment type="similarity">
    <text evidence="1">Belongs to the SHMT family.</text>
</comment>
<keyword id="KW-0028">Amino-acid biosynthesis</keyword>
<keyword id="KW-0963">Cytoplasm</keyword>
<keyword id="KW-0554">One-carbon metabolism</keyword>
<keyword id="KW-0663">Pyridoxal phosphate</keyword>
<keyword id="KW-1185">Reference proteome</keyword>
<keyword id="KW-0808">Transferase</keyword>
<proteinExistence type="inferred from homology"/>
<name>GLYA_ALLAM</name>
<gene>
    <name evidence="1" type="primary">glyA</name>
    <name type="ordered locus">Avi_1610</name>
</gene>
<dbReference type="EC" id="2.1.2.1" evidence="1"/>
<dbReference type="EMBL" id="CP000633">
    <property type="protein sequence ID" value="ACM36154.1"/>
    <property type="molecule type" value="Genomic_DNA"/>
</dbReference>
<dbReference type="RefSeq" id="WP_015915578.1">
    <property type="nucleotide sequence ID" value="NC_011989.1"/>
</dbReference>
<dbReference type="SMR" id="B9JV74"/>
<dbReference type="STRING" id="311402.Avi_1610"/>
<dbReference type="KEGG" id="avi:Avi_1610"/>
<dbReference type="eggNOG" id="COG0112">
    <property type="taxonomic scope" value="Bacteria"/>
</dbReference>
<dbReference type="HOGENOM" id="CLU_022477_2_1_5"/>
<dbReference type="UniPathway" id="UPA00193"/>
<dbReference type="UniPathway" id="UPA00288">
    <property type="reaction ID" value="UER01023"/>
</dbReference>
<dbReference type="Proteomes" id="UP000001596">
    <property type="component" value="Chromosome 1"/>
</dbReference>
<dbReference type="GO" id="GO:0005829">
    <property type="term" value="C:cytosol"/>
    <property type="evidence" value="ECO:0007669"/>
    <property type="project" value="TreeGrafter"/>
</dbReference>
<dbReference type="GO" id="GO:0004372">
    <property type="term" value="F:glycine hydroxymethyltransferase activity"/>
    <property type="evidence" value="ECO:0007669"/>
    <property type="project" value="UniProtKB-UniRule"/>
</dbReference>
<dbReference type="GO" id="GO:0030170">
    <property type="term" value="F:pyridoxal phosphate binding"/>
    <property type="evidence" value="ECO:0007669"/>
    <property type="project" value="UniProtKB-UniRule"/>
</dbReference>
<dbReference type="GO" id="GO:0019264">
    <property type="term" value="P:glycine biosynthetic process from serine"/>
    <property type="evidence" value="ECO:0007669"/>
    <property type="project" value="UniProtKB-UniRule"/>
</dbReference>
<dbReference type="GO" id="GO:0035999">
    <property type="term" value="P:tetrahydrofolate interconversion"/>
    <property type="evidence" value="ECO:0007669"/>
    <property type="project" value="UniProtKB-UniRule"/>
</dbReference>
<dbReference type="CDD" id="cd00378">
    <property type="entry name" value="SHMT"/>
    <property type="match status" value="1"/>
</dbReference>
<dbReference type="FunFam" id="3.40.640.10:FF:000001">
    <property type="entry name" value="Serine hydroxymethyltransferase"/>
    <property type="match status" value="1"/>
</dbReference>
<dbReference type="Gene3D" id="3.90.1150.10">
    <property type="entry name" value="Aspartate Aminotransferase, domain 1"/>
    <property type="match status" value="1"/>
</dbReference>
<dbReference type="Gene3D" id="3.40.640.10">
    <property type="entry name" value="Type I PLP-dependent aspartate aminotransferase-like (Major domain)"/>
    <property type="match status" value="1"/>
</dbReference>
<dbReference type="HAMAP" id="MF_00051">
    <property type="entry name" value="SHMT"/>
    <property type="match status" value="1"/>
</dbReference>
<dbReference type="InterPro" id="IPR015424">
    <property type="entry name" value="PyrdxlP-dep_Trfase"/>
</dbReference>
<dbReference type="InterPro" id="IPR015421">
    <property type="entry name" value="PyrdxlP-dep_Trfase_major"/>
</dbReference>
<dbReference type="InterPro" id="IPR015422">
    <property type="entry name" value="PyrdxlP-dep_Trfase_small"/>
</dbReference>
<dbReference type="InterPro" id="IPR001085">
    <property type="entry name" value="Ser_HO-MeTrfase"/>
</dbReference>
<dbReference type="InterPro" id="IPR049943">
    <property type="entry name" value="Ser_HO-MeTrfase-like"/>
</dbReference>
<dbReference type="InterPro" id="IPR019798">
    <property type="entry name" value="Ser_HO-MeTrfase_PLP_BS"/>
</dbReference>
<dbReference type="InterPro" id="IPR039429">
    <property type="entry name" value="SHMT-like_dom"/>
</dbReference>
<dbReference type="NCBIfam" id="NF000586">
    <property type="entry name" value="PRK00011.1"/>
    <property type="match status" value="1"/>
</dbReference>
<dbReference type="PANTHER" id="PTHR11680">
    <property type="entry name" value="SERINE HYDROXYMETHYLTRANSFERASE"/>
    <property type="match status" value="1"/>
</dbReference>
<dbReference type="PANTHER" id="PTHR11680:SF35">
    <property type="entry name" value="SERINE HYDROXYMETHYLTRANSFERASE 1"/>
    <property type="match status" value="1"/>
</dbReference>
<dbReference type="Pfam" id="PF00464">
    <property type="entry name" value="SHMT"/>
    <property type="match status" value="1"/>
</dbReference>
<dbReference type="PIRSF" id="PIRSF000412">
    <property type="entry name" value="SHMT"/>
    <property type="match status" value="1"/>
</dbReference>
<dbReference type="SUPFAM" id="SSF53383">
    <property type="entry name" value="PLP-dependent transferases"/>
    <property type="match status" value="1"/>
</dbReference>
<dbReference type="PROSITE" id="PS00096">
    <property type="entry name" value="SHMT"/>
    <property type="match status" value="1"/>
</dbReference>
<feature type="chain" id="PRO_1000195425" description="Serine hydroxymethyltransferase">
    <location>
        <begin position="1"/>
        <end position="429"/>
    </location>
</feature>
<feature type="binding site" evidence="1">
    <location>
        <position position="125"/>
    </location>
    <ligand>
        <name>(6S)-5,6,7,8-tetrahydrofolate</name>
        <dbReference type="ChEBI" id="CHEBI:57453"/>
    </ligand>
</feature>
<feature type="binding site" evidence="1">
    <location>
        <begin position="129"/>
        <end position="131"/>
    </location>
    <ligand>
        <name>(6S)-5,6,7,8-tetrahydrofolate</name>
        <dbReference type="ChEBI" id="CHEBI:57453"/>
    </ligand>
</feature>
<feature type="site" description="Plays an important role in substrate specificity" evidence="1">
    <location>
        <position position="233"/>
    </location>
</feature>
<feature type="modified residue" description="N6-(pyridoxal phosphate)lysine" evidence="1">
    <location>
        <position position="234"/>
    </location>
</feature>
<evidence type="ECO:0000255" key="1">
    <source>
        <dbReference type="HAMAP-Rule" id="MF_00051"/>
    </source>
</evidence>
<organism>
    <name type="scientific">Allorhizobium ampelinum (strain ATCC BAA-846 / DSM 112012 / S4)</name>
    <name type="common">Agrobacterium vitis (strain S4)</name>
    <dbReference type="NCBI Taxonomy" id="311402"/>
    <lineage>
        <taxon>Bacteria</taxon>
        <taxon>Pseudomonadati</taxon>
        <taxon>Pseudomonadota</taxon>
        <taxon>Alphaproteobacteria</taxon>
        <taxon>Hyphomicrobiales</taxon>
        <taxon>Rhizobiaceae</taxon>
        <taxon>Rhizobium/Agrobacterium group</taxon>
        <taxon>Allorhizobium</taxon>
        <taxon>Allorhizobium ampelinum</taxon>
    </lineage>
</organism>
<accession>B9JV74</accession>
<sequence length="429" mass="46411">MANTDAFFSRPLAETDPDIFGAIEKELGRQRHEIELIASENIVSRAVLEAQGSIMTNKYAEGYPGKRYYGGCQFVDIAEELAIERAKKLFGVNFANVQPNSGSQMNQAVFLALLQPGDTFMGLDLNSGGHLTHGSPVNMSGKWFNVVSYGVRQDDNLLDMDAVAESARKHKPKLIIAGGTAYSRIWDWKRFREIADEVGAYLMVDMAHIAGLVAGNQHPSPFPHCHVATTTTHKSLRGPRGGMILTNDEDLAKKFNSAVFPGLQGGPLMHVIAAKAVAFGEALQPEFQDYAAQVVKNAKALSETLVKGGLDIVSGGTDNHLMLVDLRKKNATGKRAEAALGRAYVTCNKNGIPFDPEKPFVTSGVRLGTPAGTTRGFKEAEFIEIGNLIVEVLDGLKVANSDEGNSAVEASVRDKVIGLTGRFPMYPYL</sequence>
<reference key="1">
    <citation type="journal article" date="2009" name="J. Bacteriol.">
        <title>Genome sequences of three Agrobacterium biovars help elucidate the evolution of multichromosome genomes in bacteria.</title>
        <authorList>
            <person name="Slater S.C."/>
            <person name="Goldman B.S."/>
            <person name="Goodner B."/>
            <person name="Setubal J.C."/>
            <person name="Farrand S.K."/>
            <person name="Nester E.W."/>
            <person name="Burr T.J."/>
            <person name="Banta L."/>
            <person name="Dickerman A.W."/>
            <person name="Paulsen I."/>
            <person name="Otten L."/>
            <person name="Suen G."/>
            <person name="Welch R."/>
            <person name="Almeida N.F."/>
            <person name="Arnold F."/>
            <person name="Burton O.T."/>
            <person name="Du Z."/>
            <person name="Ewing A."/>
            <person name="Godsy E."/>
            <person name="Heisel S."/>
            <person name="Houmiel K.L."/>
            <person name="Jhaveri J."/>
            <person name="Lu J."/>
            <person name="Miller N.M."/>
            <person name="Norton S."/>
            <person name="Chen Q."/>
            <person name="Phoolcharoen W."/>
            <person name="Ohlin V."/>
            <person name="Ondrusek D."/>
            <person name="Pride N."/>
            <person name="Stricklin S.L."/>
            <person name="Sun J."/>
            <person name="Wheeler C."/>
            <person name="Wilson L."/>
            <person name="Zhu H."/>
            <person name="Wood D.W."/>
        </authorList>
    </citation>
    <scope>NUCLEOTIDE SEQUENCE [LARGE SCALE GENOMIC DNA]</scope>
    <source>
        <strain>ATCC BAA-846 / DSM 112012 / S4</strain>
    </source>
</reference>